<keyword id="KW-0066">ATP synthesis</keyword>
<keyword id="KW-1003">Cell membrane</keyword>
<keyword id="KW-0139">CF(1)</keyword>
<keyword id="KW-0375">Hydrogen ion transport</keyword>
<keyword id="KW-0406">Ion transport</keyword>
<keyword id="KW-0472">Membrane</keyword>
<keyword id="KW-0813">Transport</keyword>
<name>ATPE_BACC3</name>
<dbReference type="EMBL" id="CP001407">
    <property type="protein sequence ID" value="ACO27988.1"/>
    <property type="molecule type" value="Genomic_DNA"/>
</dbReference>
<dbReference type="RefSeq" id="WP_000847211.1">
    <property type="nucleotide sequence ID" value="NZ_CP009318.1"/>
</dbReference>
<dbReference type="SMR" id="C1F0M7"/>
<dbReference type="GeneID" id="93005819"/>
<dbReference type="KEGG" id="bcx:BCA_5449"/>
<dbReference type="PATRIC" id="fig|572264.18.peg.5371"/>
<dbReference type="Proteomes" id="UP000002210">
    <property type="component" value="Chromosome"/>
</dbReference>
<dbReference type="GO" id="GO:0005886">
    <property type="term" value="C:plasma membrane"/>
    <property type="evidence" value="ECO:0007669"/>
    <property type="project" value="UniProtKB-SubCell"/>
</dbReference>
<dbReference type="GO" id="GO:0045259">
    <property type="term" value="C:proton-transporting ATP synthase complex"/>
    <property type="evidence" value="ECO:0007669"/>
    <property type="project" value="UniProtKB-KW"/>
</dbReference>
<dbReference type="GO" id="GO:0005524">
    <property type="term" value="F:ATP binding"/>
    <property type="evidence" value="ECO:0007669"/>
    <property type="project" value="UniProtKB-UniRule"/>
</dbReference>
<dbReference type="GO" id="GO:0046933">
    <property type="term" value="F:proton-transporting ATP synthase activity, rotational mechanism"/>
    <property type="evidence" value="ECO:0007669"/>
    <property type="project" value="UniProtKB-UniRule"/>
</dbReference>
<dbReference type="CDD" id="cd12152">
    <property type="entry name" value="F1-ATPase_delta"/>
    <property type="match status" value="1"/>
</dbReference>
<dbReference type="FunFam" id="1.20.5.440:FF:000001">
    <property type="entry name" value="ATP synthase epsilon chain"/>
    <property type="match status" value="1"/>
</dbReference>
<dbReference type="FunFam" id="2.60.15.10:FF:000001">
    <property type="entry name" value="ATP synthase epsilon chain"/>
    <property type="match status" value="1"/>
</dbReference>
<dbReference type="Gene3D" id="1.20.5.440">
    <property type="entry name" value="ATP synthase delta/epsilon subunit, C-terminal domain"/>
    <property type="match status" value="1"/>
</dbReference>
<dbReference type="Gene3D" id="2.60.15.10">
    <property type="entry name" value="F0F1 ATP synthase delta/epsilon subunit, N-terminal"/>
    <property type="match status" value="1"/>
</dbReference>
<dbReference type="HAMAP" id="MF_00530">
    <property type="entry name" value="ATP_synth_epsil_bac"/>
    <property type="match status" value="1"/>
</dbReference>
<dbReference type="InterPro" id="IPR036794">
    <property type="entry name" value="ATP_F1_dsu/esu_C_sf"/>
</dbReference>
<dbReference type="InterPro" id="IPR001469">
    <property type="entry name" value="ATP_synth_F1_dsu/esu"/>
</dbReference>
<dbReference type="InterPro" id="IPR020546">
    <property type="entry name" value="ATP_synth_F1_dsu/esu_N"/>
</dbReference>
<dbReference type="InterPro" id="IPR020547">
    <property type="entry name" value="ATP_synth_F1_esu_C"/>
</dbReference>
<dbReference type="InterPro" id="IPR036771">
    <property type="entry name" value="ATPsynth_dsu/esu_N"/>
</dbReference>
<dbReference type="NCBIfam" id="TIGR01216">
    <property type="entry name" value="ATP_synt_epsi"/>
    <property type="match status" value="1"/>
</dbReference>
<dbReference type="NCBIfam" id="NF001846">
    <property type="entry name" value="PRK00571.1-3"/>
    <property type="match status" value="1"/>
</dbReference>
<dbReference type="NCBIfam" id="NF009980">
    <property type="entry name" value="PRK13446.1"/>
    <property type="match status" value="1"/>
</dbReference>
<dbReference type="PANTHER" id="PTHR13822">
    <property type="entry name" value="ATP SYNTHASE DELTA/EPSILON CHAIN"/>
    <property type="match status" value="1"/>
</dbReference>
<dbReference type="PANTHER" id="PTHR13822:SF10">
    <property type="entry name" value="ATP SYNTHASE EPSILON CHAIN, CHLOROPLASTIC"/>
    <property type="match status" value="1"/>
</dbReference>
<dbReference type="Pfam" id="PF00401">
    <property type="entry name" value="ATP-synt_DE"/>
    <property type="match status" value="1"/>
</dbReference>
<dbReference type="Pfam" id="PF02823">
    <property type="entry name" value="ATP-synt_DE_N"/>
    <property type="match status" value="1"/>
</dbReference>
<dbReference type="SUPFAM" id="SSF46604">
    <property type="entry name" value="Epsilon subunit of F1F0-ATP synthase C-terminal domain"/>
    <property type="match status" value="1"/>
</dbReference>
<dbReference type="SUPFAM" id="SSF51344">
    <property type="entry name" value="Epsilon subunit of F1F0-ATP synthase N-terminal domain"/>
    <property type="match status" value="1"/>
</dbReference>
<sequence length="133" mass="14644">MKTFPVSIVTPDGPVYEKEVEMVSVKAESGEMGILPGHIPTVAPLKISAVRLKNGGHTDYVAVSGGFIEVRPDKVTVLSSSAEEANHIDIHRANEAKRRAEQRLQDKQAHVDFKRAEMALQRAVNRLNVSDMK</sequence>
<feature type="chain" id="PRO_1000146310" description="ATP synthase epsilon chain">
    <location>
        <begin position="1"/>
        <end position="133"/>
    </location>
</feature>
<evidence type="ECO:0000255" key="1">
    <source>
        <dbReference type="HAMAP-Rule" id="MF_00530"/>
    </source>
</evidence>
<gene>
    <name evidence="1" type="primary">atpC</name>
    <name type="ordered locus">BCA_5449</name>
</gene>
<protein>
    <recommendedName>
        <fullName evidence="1">ATP synthase epsilon chain</fullName>
    </recommendedName>
    <alternativeName>
        <fullName evidence="1">ATP synthase F1 sector epsilon subunit</fullName>
    </alternativeName>
    <alternativeName>
        <fullName evidence="1">F-ATPase epsilon subunit</fullName>
    </alternativeName>
</protein>
<proteinExistence type="inferred from homology"/>
<organism>
    <name type="scientific">Bacillus cereus (strain 03BB102)</name>
    <dbReference type="NCBI Taxonomy" id="572264"/>
    <lineage>
        <taxon>Bacteria</taxon>
        <taxon>Bacillati</taxon>
        <taxon>Bacillota</taxon>
        <taxon>Bacilli</taxon>
        <taxon>Bacillales</taxon>
        <taxon>Bacillaceae</taxon>
        <taxon>Bacillus</taxon>
        <taxon>Bacillus cereus group</taxon>
    </lineage>
</organism>
<reference key="1">
    <citation type="submission" date="2009-02" db="EMBL/GenBank/DDBJ databases">
        <title>Genome sequence of Bacillus cereus 03BB102.</title>
        <authorList>
            <person name="Dodson R.J."/>
            <person name="Jackson P."/>
            <person name="Munk A.C."/>
            <person name="Brettin T."/>
            <person name="Bruce D."/>
            <person name="Detter C."/>
            <person name="Tapia R."/>
            <person name="Han C."/>
            <person name="Sutton G."/>
            <person name="Sims D."/>
        </authorList>
    </citation>
    <scope>NUCLEOTIDE SEQUENCE [LARGE SCALE GENOMIC DNA]</scope>
    <source>
        <strain>03BB102</strain>
    </source>
</reference>
<comment type="function">
    <text evidence="1">Produces ATP from ADP in the presence of a proton gradient across the membrane.</text>
</comment>
<comment type="subunit">
    <text evidence="1">F-type ATPases have 2 components, CF(1) - the catalytic core - and CF(0) - the membrane proton channel. CF(1) has five subunits: alpha(3), beta(3), gamma(1), delta(1), epsilon(1). CF(0) has three main subunits: a, b and c.</text>
</comment>
<comment type="subcellular location">
    <subcellularLocation>
        <location evidence="1">Cell membrane</location>
        <topology evidence="1">Peripheral membrane protein</topology>
    </subcellularLocation>
</comment>
<comment type="similarity">
    <text evidence="1">Belongs to the ATPase epsilon chain family.</text>
</comment>
<accession>C1F0M7</accession>